<feature type="chain" id="PRO_0000127783" description="Cytochrome b6-f complex iron-sulfur subunit">
    <location>
        <begin position="1"/>
        <end position="178"/>
    </location>
</feature>
<feature type="transmembrane region" description="Helical" evidence="1">
    <location>
        <begin position="20"/>
        <end position="42"/>
    </location>
</feature>
<feature type="domain" description="Rieske" evidence="1">
    <location>
        <begin position="65"/>
        <end position="161"/>
    </location>
</feature>
<feature type="binding site" evidence="1">
    <location>
        <position position="107"/>
    </location>
    <ligand>
        <name>[2Fe-2S] cluster</name>
        <dbReference type="ChEBI" id="CHEBI:190135"/>
    </ligand>
</feature>
<feature type="binding site" evidence="1">
    <location>
        <position position="109"/>
    </location>
    <ligand>
        <name>[2Fe-2S] cluster</name>
        <dbReference type="ChEBI" id="CHEBI:190135"/>
    </ligand>
</feature>
<feature type="binding site" evidence="1">
    <location>
        <position position="125"/>
    </location>
    <ligand>
        <name>[2Fe-2S] cluster</name>
        <dbReference type="ChEBI" id="CHEBI:190135"/>
    </ligand>
</feature>
<feature type="binding site" evidence="1">
    <location>
        <position position="128"/>
    </location>
    <ligand>
        <name>[2Fe-2S] cluster</name>
        <dbReference type="ChEBI" id="CHEBI:190135"/>
    </ligand>
</feature>
<feature type="disulfide bond" evidence="1">
    <location>
        <begin position="112"/>
        <end position="127"/>
    </location>
</feature>
<comment type="function">
    <text evidence="1">Component of the cytochrome b6-f complex, which mediates electron transfer between photosystem II (PSII) and photosystem I (PSI), cyclic electron flow around PSI, and state transitions.</text>
</comment>
<comment type="catalytic activity">
    <reaction evidence="1">
        <text>2 oxidized [plastocyanin] + a plastoquinol + 2 H(+)(in) = 2 reduced [plastocyanin] + a plastoquinone + 4 H(+)(out)</text>
        <dbReference type="Rhea" id="RHEA:22148"/>
        <dbReference type="Rhea" id="RHEA-COMP:9561"/>
        <dbReference type="Rhea" id="RHEA-COMP:9562"/>
        <dbReference type="Rhea" id="RHEA-COMP:10039"/>
        <dbReference type="Rhea" id="RHEA-COMP:10040"/>
        <dbReference type="ChEBI" id="CHEBI:15378"/>
        <dbReference type="ChEBI" id="CHEBI:17757"/>
        <dbReference type="ChEBI" id="CHEBI:29036"/>
        <dbReference type="ChEBI" id="CHEBI:49552"/>
        <dbReference type="ChEBI" id="CHEBI:62192"/>
        <dbReference type="EC" id="7.1.1.6"/>
    </reaction>
</comment>
<comment type="cofactor">
    <cofactor evidence="1">
        <name>[2Fe-2S] cluster</name>
        <dbReference type="ChEBI" id="CHEBI:190135"/>
    </cofactor>
    <text evidence="1">Binds 1 [2Fe-2S] cluster per subunit.</text>
</comment>
<comment type="subunit">
    <text evidence="1">The 4 large subunits of the cytochrome b6-f complex are cytochrome b6, subunit IV (17 kDa polypeptide, PetD), cytochrome f and the Rieske protein, while the 4 small subunits are PetG, PetL, PetM and PetN. The complex functions as a dimer.</text>
</comment>
<comment type="subcellular location">
    <subcellularLocation>
        <location evidence="1">Cellular thylakoid membrane</location>
        <topology evidence="1">Single-pass membrane protein</topology>
    </subcellularLocation>
    <text evidence="1">The transmembrane helix obliquely spans the membrane in one monomer, and its extrinsic C-terminal domain is part of the other monomer.</text>
</comment>
<comment type="miscellaneous">
    <text>The Rieske iron-sulfur protein is a high potential 2Fe-2S protein.</text>
</comment>
<comment type="similarity">
    <text evidence="1">Belongs to the Rieske iron-sulfur protein family.</text>
</comment>
<dbReference type="EC" id="7.1.1.6" evidence="1"/>
<dbReference type="EMBL" id="BX569694">
    <property type="protein sequence ID" value="CAE08356.1"/>
    <property type="molecule type" value="Genomic_DNA"/>
</dbReference>
<dbReference type="RefSeq" id="WP_011128699.1">
    <property type="nucleotide sequence ID" value="NC_005070.1"/>
</dbReference>
<dbReference type="SMR" id="Q7U566"/>
<dbReference type="STRING" id="84588.SYNW1841"/>
<dbReference type="KEGG" id="syw:SYNW1841"/>
<dbReference type="eggNOG" id="COG0723">
    <property type="taxonomic scope" value="Bacteria"/>
</dbReference>
<dbReference type="HOGENOM" id="CLU_055690_8_0_3"/>
<dbReference type="BioCyc" id="MetaCyc:TX72_RS09270-MONOMER"/>
<dbReference type="Proteomes" id="UP000001422">
    <property type="component" value="Chromosome"/>
</dbReference>
<dbReference type="GO" id="GO:0031676">
    <property type="term" value="C:plasma membrane-derived thylakoid membrane"/>
    <property type="evidence" value="ECO:0007669"/>
    <property type="project" value="UniProtKB-SubCell"/>
</dbReference>
<dbReference type="GO" id="GO:0051537">
    <property type="term" value="F:2 iron, 2 sulfur cluster binding"/>
    <property type="evidence" value="ECO:0007669"/>
    <property type="project" value="UniProtKB-KW"/>
</dbReference>
<dbReference type="GO" id="GO:0045158">
    <property type="term" value="F:electron transporter, transferring electrons within cytochrome b6/f complex of photosystem II activity"/>
    <property type="evidence" value="ECO:0007669"/>
    <property type="project" value="UniProtKB-UniRule"/>
</dbReference>
<dbReference type="GO" id="GO:0046872">
    <property type="term" value="F:metal ion binding"/>
    <property type="evidence" value="ECO:0007669"/>
    <property type="project" value="UniProtKB-KW"/>
</dbReference>
<dbReference type="GO" id="GO:0004497">
    <property type="term" value="F:monooxygenase activity"/>
    <property type="evidence" value="ECO:0007669"/>
    <property type="project" value="UniProtKB-ARBA"/>
</dbReference>
<dbReference type="GO" id="GO:0016705">
    <property type="term" value="F:oxidoreductase activity, acting on paired donors, with incorporation or reduction of molecular oxygen"/>
    <property type="evidence" value="ECO:0007669"/>
    <property type="project" value="UniProtKB-ARBA"/>
</dbReference>
<dbReference type="GO" id="GO:0009496">
    <property type="term" value="F:plastoquinol--plastocyanin reductase activity"/>
    <property type="evidence" value="ECO:0007669"/>
    <property type="project" value="UniProtKB-UniRule"/>
</dbReference>
<dbReference type="GO" id="GO:0015979">
    <property type="term" value="P:photosynthesis"/>
    <property type="evidence" value="ECO:0007669"/>
    <property type="project" value="UniProtKB-UniRule"/>
</dbReference>
<dbReference type="CDD" id="cd03471">
    <property type="entry name" value="Rieske_cytochrome_b6f"/>
    <property type="match status" value="1"/>
</dbReference>
<dbReference type="FunFam" id="2.102.10.10:FF:000007">
    <property type="entry name" value="Cytochrome b6-f complex iron-sulfur subunit"/>
    <property type="match status" value="1"/>
</dbReference>
<dbReference type="Gene3D" id="2.102.10.10">
    <property type="entry name" value="Rieske [2Fe-2S] iron-sulphur domain"/>
    <property type="match status" value="1"/>
</dbReference>
<dbReference type="Gene3D" id="1.20.5.700">
    <property type="entry name" value="Single helix bin"/>
    <property type="match status" value="1"/>
</dbReference>
<dbReference type="HAMAP" id="MF_01335">
    <property type="entry name" value="Cytb6_f_Rieske"/>
    <property type="match status" value="1"/>
</dbReference>
<dbReference type="InterPro" id="IPR023960">
    <property type="entry name" value="Cyt_b6_f_Rieske"/>
</dbReference>
<dbReference type="InterPro" id="IPR017941">
    <property type="entry name" value="Rieske_2Fe-2S"/>
</dbReference>
<dbReference type="InterPro" id="IPR036922">
    <property type="entry name" value="Rieske_2Fe-2S_sf"/>
</dbReference>
<dbReference type="InterPro" id="IPR014349">
    <property type="entry name" value="Rieske_Fe-S_prot"/>
</dbReference>
<dbReference type="InterPro" id="IPR005805">
    <property type="entry name" value="Rieske_Fe-S_prot_C"/>
</dbReference>
<dbReference type="InterPro" id="IPR006311">
    <property type="entry name" value="TAT_signal"/>
</dbReference>
<dbReference type="NCBIfam" id="NF045928">
    <property type="entry name" value="Cytb6fFeSPetC"/>
    <property type="match status" value="1"/>
</dbReference>
<dbReference type="NCBIfam" id="NF010001">
    <property type="entry name" value="PRK13474.1"/>
    <property type="match status" value="1"/>
</dbReference>
<dbReference type="PANTHER" id="PTHR10134">
    <property type="entry name" value="CYTOCHROME B-C1 COMPLEX SUBUNIT RIESKE, MITOCHONDRIAL"/>
    <property type="match status" value="1"/>
</dbReference>
<dbReference type="Pfam" id="PF00355">
    <property type="entry name" value="Rieske"/>
    <property type="match status" value="1"/>
</dbReference>
<dbReference type="Pfam" id="PF25471">
    <property type="entry name" value="TM_PetC"/>
    <property type="match status" value="1"/>
</dbReference>
<dbReference type="PRINTS" id="PR00162">
    <property type="entry name" value="RIESKE"/>
</dbReference>
<dbReference type="SUPFAM" id="SSF50022">
    <property type="entry name" value="ISP domain"/>
    <property type="match status" value="1"/>
</dbReference>
<dbReference type="PROSITE" id="PS51296">
    <property type="entry name" value="RIESKE"/>
    <property type="match status" value="1"/>
</dbReference>
<dbReference type="PROSITE" id="PS51318">
    <property type="entry name" value="TAT"/>
    <property type="match status" value="1"/>
</dbReference>
<accession>Q7U566</accession>
<proteinExistence type="inferred from homology"/>
<keyword id="KW-0001">2Fe-2S</keyword>
<keyword id="KW-1015">Disulfide bond</keyword>
<keyword id="KW-0249">Electron transport</keyword>
<keyword id="KW-0408">Iron</keyword>
<keyword id="KW-0411">Iron-sulfur</keyword>
<keyword id="KW-0472">Membrane</keyword>
<keyword id="KW-0479">Metal-binding</keyword>
<keyword id="KW-0793">Thylakoid</keyword>
<keyword id="KW-1278">Translocase</keyword>
<keyword id="KW-0812">Transmembrane</keyword>
<keyword id="KW-1133">Transmembrane helix</keyword>
<keyword id="KW-0813">Transport</keyword>
<evidence type="ECO:0000255" key="1">
    <source>
        <dbReference type="HAMAP-Rule" id="MF_01335"/>
    </source>
</evidence>
<protein>
    <recommendedName>
        <fullName evidence="1">Cytochrome b6-f complex iron-sulfur subunit</fullName>
        <ecNumber evidence="1">7.1.1.6</ecNumber>
    </recommendedName>
    <alternativeName>
        <fullName evidence="1">Plastohydroquinone:plastocyanin oxidoreductase iron-sulfur protein</fullName>
        <shortName evidence="1">ISP</shortName>
        <shortName evidence="1">RISP</shortName>
    </alternativeName>
    <alternativeName>
        <fullName evidence="1">Rieske iron-sulfur protein</fullName>
    </alternativeName>
</protein>
<organism>
    <name type="scientific">Parasynechococcus marenigrum (strain WH8102)</name>
    <dbReference type="NCBI Taxonomy" id="84588"/>
    <lineage>
        <taxon>Bacteria</taxon>
        <taxon>Bacillati</taxon>
        <taxon>Cyanobacteriota</taxon>
        <taxon>Cyanophyceae</taxon>
        <taxon>Synechococcales</taxon>
        <taxon>Prochlorococcaceae</taxon>
        <taxon>Parasynechococcus</taxon>
        <taxon>Parasynechococcus marenigrum</taxon>
    </lineage>
</organism>
<gene>
    <name evidence="1" type="primary">petC</name>
    <name type="ordered locus">SYNW1841</name>
</gene>
<reference key="1">
    <citation type="journal article" date="2003" name="Nature">
        <title>The genome of a motile marine Synechococcus.</title>
        <authorList>
            <person name="Palenik B."/>
            <person name="Brahamsha B."/>
            <person name="Larimer F.W."/>
            <person name="Land M.L."/>
            <person name="Hauser L."/>
            <person name="Chain P."/>
            <person name="Lamerdin J.E."/>
            <person name="Regala W."/>
            <person name="Allen E.E."/>
            <person name="McCarren J."/>
            <person name="Paulsen I.T."/>
            <person name="Dufresne A."/>
            <person name="Partensky F."/>
            <person name="Webb E.A."/>
            <person name="Waterbury J."/>
        </authorList>
    </citation>
    <scope>NUCLEOTIDE SEQUENCE [LARGE SCALE GENOMIC DNA]</scope>
    <source>
        <strain>WH8102</strain>
    </source>
</reference>
<name>UCRI_PARMW</name>
<sequence>MTQLSSSDVPGMGRRQFMNLLTFGSVTGVALGALYPVVNYFIPPRAAGAGGGTTAKDELGNAITATGWLSSHPEGDRSLVQGLKGDPTYLIVEGPDAIGSYGINAICTHLGCVVPWNSGANKFMCPCHGSQYDATGKVVRGPAPLSLALANVSVENDNVFVSQWTETDFRTGDKPWWA</sequence>